<dbReference type="EC" id="2.8.4.3" evidence="1"/>
<dbReference type="EMBL" id="CP001291">
    <property type="protein sequence ID" value="ACK68576.1"/>
    <property type="molecule type" value="Genomic_DNA"/>
</dbReference>
<dbReference type="RefSeq" id="WP_012597527.1">
    <property type="nucleotide sequence ID" value="NC_011729.1"/>
</dbReference>
<dbReference type="SMR" id="B7K993"/>
<dbReference type="STRING" id="65393.PCC7424_0106"/>
<dbReference type="KEGG" id="cyc:PCC7424_0106"/>
<dbReference type="eggNOG" id="COG0621">
    <property type="taxonomic scope" value="Bacteria"/>
</dbReference>
<dbReference type="HOGENOM" id="CLU_018697_2_2_3"/>
<dbReference type="OrthoDB" id="9805215at2"/>
<dbReference type="Proteomes" id="UP000002384">
    <property type="component" value="Chromosome"/>
</dbReference>
<dbReference type="GO" id="GO:0005737">
    <property type="term" value="C:cytoplasm"/>
    <property type="evidence" value="ECO:0007669"/>
    <property type="project" value="UniProtKB-SubCell"/>
</dbReference>
<dbReference type="GO" id="GO:0051539">
    <property type="term" value="F:4 iron, 4 sulfur cluster binding"/>
    <property type="evidence" value="ECO:0007669"/>
    <property type="project" value="UniProtKB-UniRule"/>
</dbReference>
<dbReference type="GO" id="GO:0046872">
    <property type="term" value="F:metal ion binding"/>
    <property type="evidence" value="ECO:0007669"/>
    <property type="project" value="UniProtKB-KW"/>
</dbReference>
<dbReference type="GO" id="GO:0035596">
    <property type="term" value="F:methylthiotransferase activity"/>
    <property type="evidence" value="ECO:0007669"/>
    <property type="project" value="InterPro"/>
</dbReference>
<dbReference type="GO" id="GO:0035600">
    <property type="term" value="P:tRNA methylthiolation"/>
    <property type="evidence" value="ECO:0007669"/>
    <property type="project" value="TreeGrafter"/>
</dbReference>
<dbReference type="CDD" id="cd01335">
    <property type="entry name" value="Radical_SAM"/>
    <property type="match status" value="1"/>
</dbReference>
<dbReference type="FunFam" id="3.40.50.12160:FF:000006">
    <property type="entry name" value="tRNA-2-methylthio-N(6)-dimethylallyladenosine synthase"/>
    <property type="match status" value="1"/>
</dbReference>
<dbReference type="FunFam" id="3.80.30.20:FF:000001">
    <property type="entry name" value="tRNA-2-methylthio-N(6)-dimethylallyladenosine synthase 2"/>
    <property type="match status" value="1"/>
</dbReference>
<dbReference type="Gene3D" id="3.40.50.12160">
    <property type="entry name" value="Methylthiotransferase, N-terminal domain"/>
    <property type="match status" value="1"/>
</dbReference>
<dbReference type="Gene3D" id="3.80.30.20">
    <property type="entry name" value="tm_1862 like domain"/>
    <property type="match status" value="1"/>
</dbReference>
<dbReference type="HAMAP" id="MF_01864">
    <property type="entry name" value="tRNA_metthiotr_MiaB"/>
    <property type="match status" value="1"/>
</dbReference>
<dbReference type="InterPro" id="IPR006638">
    <property type="entry name" value="Elp3/MiaA/NifB-like_rSAM"/>
</dbReference>
<dbReference type="InterPro" id="IPR005839">
    <property type="entry name" value="Methylthiotransferase"/>
</dbReference>
<dbReference type="InterPro" id="IPR020612">
    <property type="entry name" value="Methylthiotransferase_CS"/>
</dbReference>
<dbReference type="InterPro" id="IPR013848">
    <property type="entry name" value="Methylthiotransferase_N"/>
</dbReference>
<dbReference type="InterPro" id="IPR038135">
    <property type="entry name" value="Methylthiotransferase_N_sf"/>
</dbReference>
<dbReference type="InterPro" id="IPR006463">
    <property type="entry name" value="MiaB_methiolase"/>
</dbReference>
<dbReference type="InterPro" id="IPR007197">
    <property type="entry name" value="rSAM"/>
</dbReference>
<dbReference type="InterPro" id="IPR023404">
    <property type="entry name" value="rSAM_horseshoe"/>
</dbReference>
<dbReference type="InterPro" id="IPR002792">
    <property type="entry name" value="TRAM_dom"/>
</dbReference>
<dbReference type="NCBIfam" id="TIGR01574">
    <property type="entry name" value="miaB-methiolase"/>
    <property type="match status" value="1"/>
</dbReference>
<dbReference type="NCBIfam" id="TIGR00089">
    <property type="entry name" value="MiaB/RimO family radical SAM methylthiotransferase"/>
    <property type="match status" value="1"/>
</dbReference>
<dbReference type="PANTHER" id="PTHR43020">
    <property type="entry name" value="CDK5 REGULATORY SUBUNIT-ASSOCIATED PROTEIN 1"/>
    <property type="match status" value="1"/>
</dbReference>
<dbReference type="PANTHER" id="PTHR43020:SF2">
    <property type="entry name" value="MITOCHONDRIAL TRNA METHYLTHIOTRANSFERASE CDK5RAP1"/>
    <property type="match status" value="1"/>
</dbReference>
<dbReference type="Pfam" id="PF04055">
    <property type="entry name" value="Radical_SAM"/>
    <property type="match status" value="1"/>
</dbReference>
<dbReference type="Pfam" id="PF01938">
    <property type="entry name" value="TRAM"/>
    <property type="match status" value="1"/>
</dbReference>
<dbReference type="Pfam" id="PF00919">
    <property type="entry name" value="UPF0004"/>
    <property type="match status" value="1"/>
</dbReference>
<dbReference type="SFLD" id="SFLDF00273">
    <property type="entry name" value="(dimethylallyl)adenosine_tRNA"/>
    <property type="match status" value="1"/>
</dbReference>
<dbReference type="SFLD" id="SFLDG01082">
    <property type="entry name" value="B12-binding_domain_containing"/>
    <property type="match status" value="1"/>
</dbReference>
<dbReference type="SFLD" id="SFLDG01061">
    <property type="entry name" value="methylthiotransferase"/>
    <property type="match status" value="1"/>
</dbReference>
<dbReference type="SMART" id="SM00729">
    <property type="entry name" value="Elp3"/>
    <property type="match status" value="1"/>
</dbReference>
<dbReference type="SUPFAM" id="SSF102114">
    <property type="entry name" value="Radical SAM enzymes"/>
    <property type="match status" value="1"/>
</dbReference>
<dbReference type="PROSITE" id="PS51449">
    <property type="entry name" value="MTTASE_N"/>
    <property type="match status" value="1"/>
</dbReference>
<dbReference type="PROSITE" id="PS01278">
    <property type="entry name" value="MTTASE_RADICAL"/>
    <property type="match status" value="1"/>
</dbReference>
<dbReference type="PROSITE" id="PS51918">
    <property type="entry name" value="RADICAL_SAM"/>
    <property type="match status" value="1"/>
</dbReference>
<dbReference type="PROSITE" id="PS50926">
    <property type="entry name" value="TRAM"/>
    <property type="match status" value="1"/>
</dbReference>
<proteinExistence type="inferred from homology"/>
<comment type="function">
    <text evidence="1">Catalyzes the methylthiolation of N6-(dimethylallyl)adenosine (i(6)A), leading to the formation of 2-methylthio-N6-(dimethylallyl)adenosine (ms(2)i(6)A) at position 37 in tRNAs that read codons beginning with uridine.</text>
</comment>
<comment type="catalytic activity">
    <reaction evidence="1">
        <text>N(6)-dimethylallyladenosine(37) in tRNA + (sulfur carrier)-SH + AH2 + 2 S-adenosyl-L-methionine = 2-methylsulfanyl-N(6)-dimethylallyladenosine(37) in tRNA + (sulfur carrier)-H + 5'-deoxyadenosine + L-methionine + A + S-adenosyl-L-homocysteine + 2 H(+)</text>
        <dbReference type="Rhea" id="RHEA:37067"/>
        <dbReference type="Rhea" id="RHEA-COMP:10375"/>
        <dbReference type="Rhea" id="RHEA-COMP:10376"/>
        <dbReference type="Rhea" id="RHEA-COMP:14737"/>
        <dbReference type="Rhea" id="RHEA-COMP:14739"/>
        <dbReference type="ChEBI" id="CHEBI:13193"/>
        <dbReference type="ChEBI" id="CHEBI:15378"/>
        <dbReference type="ChEBI" id="CHEBI:17319"/>
        <dbReference type="ChEBI" id="CHEBI:17499"/>
        <dbReference type="ChEBI" id="CHEBI:29917"/>
        <dbReference type="ChEBI" id="CHEBI:57844"/>
        <dbReference type="ChEBI" id="CHEBI:57856"/>
        <dbReference type="ChEBI" id="CHEBI:59789"/>
        <dbReference type="ChEBI" id="CHEBI:64428"/>
        <dbReference type="ChEBI" id="CHEBI:74415"/>
        <dbReference type="ChEBI" id="CHEBI:74417"/>
        <dbReference type="EC" id="2.8.4.3"/>
    </reaction>
</comment>
<comment type="cofactor">
    <cofactor evidence="1">
        <name>[4Fe-4S] cluster</name>
        <dbReference type="ChEBI" id="CHEBI:49883"/>
    </cofactor>
    <text evidence="1">Binds 2 [4Fe-4S] clusters. One cluster is coordinated with 3 cysteines and an exchangeable S-adenosyl-L-methionine.</text>
</comment>
<comment type="subunit">
    <text evidence="1">Monomer.</text>
</comment>
<comment type="subcellular location">
    <subcellularLocation>
        <location evidence="1">Cytoplasm</location>
    </subcellularLocation>
</comment>
<comment type="similarity">
    <text evidence="1">Belongs to the methylthiotransferase family. MiaB subfamily.</text>
</comment>
<accession>B7K993</accession>
<sequence>MTTSERRYHITTFGCQMNKADSERMAGILEDIGYQWSDDPNEADLVLYNTCTIRDNAEQKVYSYLGRQAKRKHEKPDLTLIVAGCVAQQEGEKLLRRVPELDLVMGPQHANRLQDLLQEVLAGNQVVATEPIHIVEDITKPRRESTVTAWVNVIYGCNERCTYCVVPNVRGVEQSRTPQAIRAEMVELGQQGYKEITLLGQNIDAYGRDLPGVTESGRHQHTLTDLLYYVNDVPGIERIRFATSHPRYFTERLIVACKELPKVCEHFHIPFQSGDNDLLKAMKRGYTHERYRQIIDKIREYMPDASISADAIVGFPGETEAQFENTLKLVEDIGFDQLNTAAYSPRPGTPAALWDNQLSEEVKSDRLQRLNHLVAIKAAERSQRYLGRIEEVLVEDVNPKDLTQVMGRTRGNRLTFFTGDINQLKGQLVEVKITDVRAFSLTGEPVKILSTSLS</sequence>
<organism>
    <name type="scientific">Gloeothece citriformis (strain PCC 7424)</name>
    <name type="common">Cyanothece sp. (strain PCC 7424)</name>
    <dbReference type="NCBI Taxonomy" id="65393"/>
    <lineage>
        <taxon>Bacteria</taxon>
        <taxon>Bacillati</taxon>
        <taxon>Cyanobacteriota</taxon>
        <taxon>Cyanophyceae</taxon>
        <taxon>Oscillatoriophycideae</taxon>
        <taxon>Chroococcales</taxon>
        <taxon>Aphanothecaceae</taxon>
        <taxon>Gloeothece</taxon>
        <taxon>Gloeothece citriformis</taxon>
    </lineage>
</organism>
<keyword id="KW-0004">4Fe-4S</keyword>
<keyword id="KW-0963">Cytoplasm</keyword>
<keyword id="KW-0408">Iron</keyword>
<keyword id="KW-0411">Iron-sulfur</keyword>
<keyword id="KW-0479">Metal-binding</keyword>
<keyword id="KW-1185">Reference proteome</keyword>
<keyword id="KW-0949">S-adenosyl-L-methionine</keyword>
<keyword id="KW-0808">Transferase</keyword>
<keyword id="KW-0819">tRNA processing</keyword>
<protein>
    <recommendedName>
        <fullName evidence="1">tRNA-2-methylthio-N(6)-dimethylallyladenosine synthase</fullName>
        <ecNumber evidence="1">2.8.4.3</ecNumber>
    </recommendedName>
    <alternativeName>
        <fullName evidence="1">(Dimethylallyl)adenosine tRNA methylthiotransferase MiaB</fullName>
    </alternativeName>
    <alternativeName>
        <fullName evidence="1">tRNA-i(6)A37 methylthiotransferase</fullName>
    </alternativeName>
</protein>
<gene>
    <name evidence="1" type="primary">miaB</name>
    <name type="ordered locus">PCC7424_0106</name>
</gene>
<feature type="chain" id="PRO_0000374251" description="tRNA-2-methylthio-N(6)-dimethylallyladenosine synthase">
    <location>
        <begin position="1"/>
        <end position="454"/>
    </location>
</feature>
<feature type="domain" description="MTTase N-terminal" evidence="1">
    <location>
        <begin position="6"/>
        <end position="122"/>
    </location>
</feature>
<feature type="domain" description="Radical SAM core" evidence="2">
    <location>
        <begin position="143"/>
        <end position="380"/>
    </location>
</feature>
<feature type="domain" description="TRAM" evidence="1">
    <location>
        <begin position="383"/>
        <end position="447"/>
    </location>
</feature>
<feature type="binding site" evidence="1">
    <location>
        <position position="15"/>
    </location>
    <ligand>
        <name>[4Fe-4S] cluster</name>
        <dbReference type="ChEBI" id="CHEBI:49883"/>
        <label>1</label>
    </ligand>
</feature>
<feature type="binding site" evidence="1">
    <location>
        <position position="51"/>
    </location>
    <ligand>
        <name>[4Fe-4S] cluster</name>
        <dbReference type="ChEBI" id="CHEBI:49883"/>
        <label>1</label>
    </ligand>
</feature>
<feature type="binding site" evidence="1">
    <location>
        <position position="85"/>
    </location>
    <ligand>
        <name>[4Fe-4S] cluster</name>
        <dbReference type="ChEBI" id="CHEBI:49883"/>
        <label>1</label>
    </ligand>
</feature>
<feature type="binding site" evidence="1">
    <location>
        <position position="157"/>
    </location>
    <ligand>
        <name>[4Fe-4S] cluster</name>
        <dbReference type="ChEBI" id="CHEBI:49883"/>
        <label>2</label>
        <note>4Fe-4S-S-AdoMet</note>
    </ligand>
</feature>
<feature type="binding site" evidence="1">
    <location>
        <position position="161"/>
    </location>
    <ligand>
        <name>[4Fe-4S] cluster</name>
        <dbReference type="ChEBI" id="CHEBI:49883"/>
        <label>2</label>
        <note>4Fe-4S-S-AdoMet</note>
    </ligand>
</feature>
<feature type="binding site" evidence="1">
    <location>
        <position position="164"/>
    </location>
    <ligand>
        <name>[4Fe-4S] cluster</name>
        <dbReference type="ChEBI" id="CHEBI:49883"/>
        <label>2</label>
        <note>4Fe-4S-S-AdoMet</note>
    </ligand>
</feature>
<name>MIAB_GLOC7</name>
<reference key="1">
    <citation type="journal article" date="2011" name="MBio">
        <title>Novel metabolic attributes of the genus Cyanothece, comprising a group of unicellular nitrogen-fixing Cyanobacteria.</title>
        <authorList>
            <person name="Bandyopadhyay A."/>
            <person name="Elvitigala T."/>
            <person name="Welsh E."/>
            <person name="Stockel J."/>
            <person name="Liberton M."/>
            <person name="Min H."/>
            <person name="Sherman L.A."/>
            <person name="Pakrasi H.B."/>
        </authorList>
    </citation>
    <scope>NUCLEOTIDE SEQUENCE [LARGE SCALE GENOMIC DNA]</scope>
    <source>
        <strain>PCC 7424</strain>
    </source>
</reference>
<evidence type="ECO:0000255" key="1">
    <source>
        <dbReference type="HAMAP-Rule" id="MF_01864"/>
    </source>
</evidence>
<evidence type="ECO:0000255" key="2">
    <source>
        <dbReference type="PROSITE-ProRule" id="PRU01266"/>
    </source>
</evidence>